<feature type="chain" id="PRO_0000175886" description="Probable transcriptional regulatory protein YeeN">
    <location>
        <begin position="1"/>
        <end position="238"/>
    </location>
</feature>
<protein>
    <recommendedName>
        <fullName evidence="1">Probable transcriptional regulatory protein YeeN</fullName>
    </recommendedName>
</protein>
<dbReference type="EMBL" id="AE006468">
    <property type="protein sequence ID" value="AAL23317.1"/>
    <property type="status" value="ALT_INIT"/>
    <property type="molecule type" value="Genomic_DNA"/>
</dbReference>
<dbReference type="RefSeq" id="NP_463358.3">
    <property type="nucleotide sequence ID" value="NC_003197.2"/>
</dbReference>
<dbReference type="SMR" id="Q8ZK08"/>
<dbReference type="STRING" id="99287.STM4499"/>
<dbReference type="PaxDb" id="99287-STM4499"/>
<dbReference type="GeneID" id="1256025"/>
<dbReference type="KEGG" id="stm:STM4499"/>
<dbReference type="PATRIC" id="fig|99287.12.peg.4735"/>
<dbReference type="HOGENOM" id="CLU_062974_2_0_6"/>
<dbReference type="OMA" id="FGPGGCM"/>
<dbReference type="PhylomeDB" id="Q8ZK08"/>
<dbReference type="Proteomes" id="UP000001014">
    <property type="component" value="Chromosome"/>
</dbReference>
<dbReference type="GO" id="GO:0005829">
    <property type="term" value="C:cytosol"/>
    <property type="evidence" value="ECO:0000318"/>
    <property type="project" value="GO_Central"/>
</dbReference>
<dbReference type="GO" id="GO:0003677">
    <property type="term" value="F:DNA binding"/>
    <property type="evidence" value="ECO:0007669"/>
    <property type="project" value="UniProtKB-UniRule"/>
</dbReference>
<dbReference type="GO" id="GO:0006355">
    <property type="term" value="P:regulation of DNA-templated transcription"/>
    <property type="evidence" value="ECO:0007669"/>
    <property type="project" value="UniProtKB-UniRule"/>
</dbReference>
<dbReference type="FunFam" id="1.10.10.200:FF:000003">
    <property type="entry name" value="Probable transcriptional regulatory protein YeeN"/>
    <property type="match status" value="1"/>
</dbReference>
<dbReference type="FunFam" id="3.30.70.980:FF:000004">
    <property type="entry name" value="Probable transcriptional regulatory protein YeeN"/>
    <property type="match status" value="1"/>
</dbReference>
<dbReference type="Gene3D" id="1.10.10.200">
    <property type="match status" value="1"/>
</dbReference>
<dbReference type="Gene3D" id="3.30.70.980">
    <property type="match status" value="2"/>
</dbReference>
<dbReference type="HAMAP" id="MF_00693">
    <property type="entry name" value="Transcrip_reg_TACO1"/>
    <property type="match status" value="1"/>
</dbReference>
<dbReference type="HAMAP" id="MF_00918">
    <property type="entry name" value="Transcrip_reg_TACO1_YeeN"/>
    <property type="match status" value="1"/>
</dbReference>
<dbReference type="InterPro" id="IPR017856">
    <property type="entry name" value="Integrase-like_N"/>
</dbReference>
<dbReference type="InterPro" id="IPR048300">
    <property type="entry name" value="TACO1_YebC-like_2nd/3rd_dom"/>
</dbReference>
<dbReference type="InterPro" id="IPR049083">
    <property type="entry name" value="TACO1_YebC_N"/>
</dbReference>
<dbReference type="InterPro" id="IPR002876">
    <property type="entry name" value="Transcrip_reg_TACO1-like"/>
</dbReference>
<dbReference type="InterPro" id="IPR026564">
    <property type="entry name" value="Transcrip_reg_TACO1-like_dom3"/>
</dbReference>
<dbReference type="InterPro" id="IPR026562">
    <property type="entry name" value="Transcrip_reg_TACO1_YeeN"/>
</dbReference>
<dbReference type="InterPro" id="IPR029072">
    <property type="entry name" value="YebC-like"/>
</dbReference>
<dbReference type="NCBIfam" id="NF009044">
    <property type="entry name" value="PRK12378.1"/>
    <property type="match status" value="1"/>
</dbReference>
<dbReference type="NCBIfam" id="TIGR01033">
    <property type="entry name" value="YebC/PmpR family DNA-binding transcriptional regulator"/>
    <property type="match status" value="1"/>
</dbReference>
<dbReference type="PANTHER" id="PTHR12532">
    <property type="entry name" value="TRANSLATIONAL ACTIVATOR OF CYTOCHROME C OXIDASE 1"/>
    <property type="match status" value="1"/>
</dbReference>
<dbReference type="PANTHER" id="PTHR12532:SF0">
    <property type="entry name" value="TRANSLATIONAL ACTIVATOR OF CYTOCHROME C OXIDASE 1"/>
    <property type="match status" value="1"/>
</dbReference>
<dbReference type="Pfam" id="PF20772">
    <property type="entry name" value="TACO1_YebC_N"/>
    <property type="match status" value="1"/>
</dbReference>
<dbReference type="Pfam" id="PF01709">
    <property type="entry name" value="Transcrip_reg"/>
    <property type="match status" value="1"/>
</dbReference>
<dbReference type="SUPFAM" id="SSF75625">
    <property type="entry name" value="YebC-like"/>
    <property type="match status" value="1"/>
</dbReference>
<reference key="1">
    <citation type="journal article" date="2001" name="Nature">
        <title>Complete genome sequence of Salmonella enterica serovar Typhimurium LT2.</title>
        <authorList>
            <person name="McClelland M."/>
            <person name="Sanderson K.E."/>
            <person name="Spieth J."/>
            <person name="Clifton S.W."/>
            <person name="Latreille P."/>
            <person name="Courtney L."/>
            <person name="Porwollik S."/>
            <person name="Ali J."/>
            <person name="Dante M."/>
            <person name="Du F."/>
            <person name="Hou S."/>
            <person name="Layman D."/>
            <person name="Leonard S."/>
            <person name="Nguyen C."/>
            <person name="Scott K."/>
            <person name="Holmes A."/>
            <person name="Grewal N."/>
            <person name="Mulvaney E."/>
            <person name="Ryan E."/>
            <person name="Sun H."/>
            <person name="Florea L."/>
            <person name="Miller W."/>
            <person name="Stoneking T."/>
            <person name="Nhan M."/>
            <person name="Waterston R."/>
            <person name="Wilson R.K."/>
        </authorList>
    </citation>
    <scope>NUCLEOTIDE SEQUENCE [LARGE SCALE GENOMIC DNA]</scope>
    <source>
        <strain>LT2 / SGSC1412 / ATCC 700720</strain>
    </source>
</reference>
<proteinExistence type="inferred from homology"/>
<evidence type="ECO:0000255" key="1">
    <source>
        <dbReference type="HAMAP-Rule" id="MF_00918"/>
    </source>
</evidence>
<evidence type="ECO:0000305" key="2"/>
<organism>
    <name type="scientific">Salmonella typhimurium (strain LT2 / SGSC1412 / ATCC 700720)</name>
    <dbReference type="NCBI Taxonomy" id="99287"/>
    <lineage>
        <taxon>Bacteria</taxon>
        <taxon>Pseudomonadati</taxon>
        <taxon>Pseudomonadota</taxon>
        <taxon>Gammaproteobacteria</taxon>
        <taxon>Enterobacterales</taxon>
        <taxon>Enterobacteriaceae</taxon>
        <taxon>Salmonella</taxon>
    </lineage>
</organism>
<accession>Q8ZK08</accession>
<comment type="subcellular location">
    <subcellularLocation>
        <location evidence="1">Cytoplasm</location>
    </subcellularLocation>
</comment>
<comment type="similarity">
    <text evidence="1">Belongs to the TACO1 family. YeeN subfamily.</text>
</comment>
<comment type="sequence caution" evidence="2">
    <conflict type="erroneous initiation">
        <sequence resource="EMBL-CDS" id="AAL23317"/>
    </conflict>
</comment>
<gene>
    <name evidence="1" type="primary">yeeN</name>
    <name type="ordered locus">STM4499</name>
</gene>
<keyword id="KW-0963">Cytoplasm</keyword>
<keyword id="KW-0238">DNA-binding</keyword>
<keyword id="KW-1185">Reference proteome</keyword>
<keyword id="KW-0804">Transcription</keyword>
<keyword id="KW-0805">Transcription regulation</keyword>
<name>YEEN_SALTY</name>
<sequence length="238" mass="25727">MGRKWANIVAKKTAKDGATSKVYAKFGVEIYAAAKQGEPDPESNSALKFVIERAKQAQVPKHVIDKAIDKAKGGGDETFVQGRYEGFGPNGSMVIAETLTSNVNRTIANIRTIFNKKGGNIGAAGAVSYMFDNTGVIVFKGTDPDHIFEILLDAEVDVRDVTEEEGNIVIYTEATDLHKGIAALKAAGISEFSTTELEMIAQSEVELSPEDLEIFEGLVDALEDDDDVQKVYHNVANL</sequence>